<gene>
    <name evidence="1" type="primary">ruvB</name>
    <name type="ordered locus">Sputw3181_2069</name>
</gene>
<organism>
    <name type="scientific">Shewanella sp. (strain W3-18-1)</name>
    <dbReference type="NCBI Taxonomy" id="351745"/>
    <lineage>
        <taxon>Bacteria</taxon>
        <taxon>Pseudomonadati</taxon>
        <taxon>Pseudomonadota</taxon>
        <taxon>Gammaproteobacteria</taxon>
        <taxon>Alteromonadales</taxon>
        <taxon>Shewanellaceae</taxon>
        <taxon>Shewanella</taxon>
    </lineage>
</organism>
<keyword id="KW-0067">ATP-binding</keyword>
<keyword id="KW-0963">Cytoplasm</keyword>
<keyword id="KW-0227">DNA damage</keyword>
<keyword id="KW-0233">DNA recombination</keyword>
<keyword id="KW-0234">DNA repair</keyword>
<keyword id="KW-0238">DNA-binding</keyword>
<keyword id="KW-0378">Hydrolase</keyword>
<keyword id="KW-0547">Nucleotide-binding</keyword>
<evidence type="ECO:0000255" key="1">
    <source>
        <dbReference type="HAMAP-Rule" id="MF_00016"/>
    </source>
</evidence>
<name>RUVB_SHESW</name>
<dbReference type="EC" id="3.6.4.-" evidence="1"/>
<dbReference type="EMBL" id="CP000503">
    <property type="protein sequence ID" value="ABM24897.1"/>
    <property type="molecule type" value="Genomic_DNA"/>
</dbReference>
<dbReference type="RefSeq" id="WP_011789368.1">
    <property type="nucleotide sequence ID" value="NC_008750.1"/>
</dbReference>
<dbReference type="SMR" id="A1RJQ2"/>
<dbReference type="KEGG" id="shw:Sputw3181_2069"/>
<dbReference type="HOGENOM" id="CLU_055599_1_0_6"/>
<dbReference type="Proteomes" id="UP000002597">
    <property type="component" value="Chromosome"/>
</dbReference>
<dbReference type="GO" id="GO:0005737">
    <property type="term" value="C:cytoplasm"/>
    <property type="evidence" value="ECO:0007669"/>
    <property type="project" value="UniProtKB-SubCell"/>
</dbReference>
<dbReference type="GO" id="GO:0048476">
    <property type="term" value="C:Holliday junction resolvase complex"/>
    <property type="evidence" value="ECO:0007669"/>
    <property type="project" value="UniProtKB-UniRule"/>
</dbReference>
<dbReference type="GO" id="GO:0005524">
    <property type="term" value="F:ATP binding"/>
    <property type="evidence" value="ECO:0007669"/>
    <property type="project" value="UniProtKB-UniRule"/>
</dbReference>
<dbReference type="GO" id="GO:0016887">
    <property type="term" value="F:ATP hydrolysis activity"/>
    <property type="evidence" value="ECO:0007669"/>
    <property type="project" value="InterPro"/>
</dbReference>
<dbReference type="GO" id="GO:0000400">
    <property type="term" value="F:four-way junction DNA binding"/>
    <property type="evidence" value="ECO:0007669"/>
    <property type="project" value="UniProtKB-UniRule"/>
</dbReference>
<dbReference type="GO" id="GO:0009378">
    <property type="term" value="F:four-way junction helicase activity"/>
    <property type="evidence" value="ECO:0007669"/>
    <property type="project" value="InterPro"/>
</dbReference>
<dbReference type="GO" id="GO:0006310">
    <property type="term" value="P:DNA recombination"/>
    <property type="evidence" value="ECO:0007669"/>
    <property type="project" value="UniProtKB-UniRule"/>
</dbReference>
<dbReference type="GO" id="GO:0006281">
    <property type="term" value="P:DNA repair"/>
    <property type="evidence" value="ECO:0007669"/>
    <property type="project" value="UniProtKB-UniRule"/>
</dbReference>
<dbReference type="CDD" id="cd00009">
    <property type="entry name" value="AAA"/>
    <property type="match status" value="1"/>
</dbReference>
<dbReference type="FunFam" id="1.10.10.10:FF:000086">
    <property type="entry name" value="Holliday junction ATP-dependent DNA helicase RuvB"/>
    <property type="match status" value="1"/>
</dbReference>
<dbReference type="FunFam" id="1.10.8.60:FF:000023">
    <property type="entry name" value="Holliday junction ATP-dependent DNA helicase RuvB"/>
    <property type="match status" value="1"/>
</dbReference>
<dbReference type="FunFam" id="3.40.50.300:FF:000073">
    <property type="entry name" value="Holliday junction ATP-dependent DNA helicase RuvB"/>
    <property type="match status" value="1"/>
</dbReference>
<dbReference type="Gene3D" id="1.10.8.60">
    <property type="match status" value="1"/>
</dbReference>
<dbReference type="Gene3D" id="3.40.50.300">
    <property type="entry name" value="P-loop containing nucleotide triphosphate hydrolases"/>
    <property type="match status" value="1"/>
</dbReference>
<dbReference type="Gene3D" id="1.10.10.10">
    <property type="entry name" value="Winged helix-like DNA-binding domain superfamily/Winged helix DNA-binding domain"/>
    <property type="match status" value="1"/>
</dbReference>
<dbReference type="HAMAP" id="MF_00016">
    <property type="entry name" value="DNA_HJ_migration_RuvB"/>
    <property type="match status" value="1"/>
</dbReference>
<dbReference type="InterPro" id="IPR003593">
    <property type="entry name" value="AAA+_ATPase"/>
</dbReference>
<dbReference type="InterPro" id="IPR041445">
    <property type="entry name" value="AAA_lid_4"/>
</dbReference>
<dbReference type="InterPro" id="IPR004605">
    <property type="entry name" value="DNA_helicase_Holl-junc_RuvB"/>
</dbReference>
<dbReference type="InterPro" id="IPR027417">
    <property type="entry name" value="P-loop_NTPase"/>
</dbReference>
<dbReference type="InterPro" id="IPR008824">
    <property type="entry name" value="RuvB-like_N"/>
</dbReference>
<dbReference type="InterPro" id="IPR008823">
    <property type="entry name" value="RuvB_C"/>
</dbReference>
<dbReference type="InterPro" id="IPR036388">
    <property type="entry name" value="WH-like_DNA-bd_sf"/>
</dbReference>
<dbReference type="InterPro" id="IPR036390">
    <property type="entry name" value="WH_DNA-bd_sf"/>
</dbReference>
<dbReference type="NCBIfam" id="NF000868">
    <property type="entry name" value="PRK00080.1"/>
    <property type="match status" value="1"/>
</dbReference>
<dbReference type="NCBIfam" id="TIGR00635">
    <property type="entry name" value="ruvB"/>
    <property type="match status" value="1"/>
</dbReference>
<dbReference type="PANTHER" id="PTHR42848">
    <property type="match status" value="1"/>
</dbReference>
<dbReference type="PANTHER" id="PTHR42848:SF1">
    <property type="entry name" value="HOLLIDAY JUNCTION BRANCH MIGRATION COMPLEX SUBUNIT RUVB"/>
    <property type="match status" value="1"/>
</dbReference>
<dbReference type="Pfam" id="PF17864">
    <property type="entry name" value="AAA_lid_4"/>
    <property type="match status" value="1"/>
</dbReference>
<dbReference type="Pfam" id="PF05491">
    <property type="entry name" value="RuvB_C"/>
    <property type="match status" value="1"/>
</dbReference>
<dbReference type="Pfam" id="PF05496">
    <property type="entry name" value="RuvB_N"/>
    <property type="match status" value="1"/>
</dbReference>
<dbReference type="SMART" id="SM00382">
    <property type="entry name" value="AAA"/>
    <property type="match status" value="1"/>
</dbReference>
<dbReference type="SUPFAM" id="SSF52540">
    <property type="entry name" value="P-loop containing nucleoside triphosphate hydrolases"/>
    <property type="match status" value="1"/>
</dbReference>
<dbReference type="SUPFAM" id="SSF46785">
    <property type="entry name" value="Winged helix' DNA-binding domain"/>
    <property type="match status" value="1"/>
</dbReference>
<sequence length="334" mass="37165">MIEADRLIQPQLQVQDDVVDRAMRPKLLDEYTGQDDTRAQLKVFIQAAKNRNEALDHMLIYGPPGLGKTTLAMIVANEMGVNIKSTSGPVLEKAGDLAALLTNLESGDVLFIDEIHRLSPVVEEILYPAMEDYQLDIMIGEGPAARSIKLDLPPFTLVGATTRAGALTSPLRARFGIPLRLEFYNIKDLSTIVTRSAQVMGLEIDTEGAFEIARRSRGTPRIANRLLRRVRDYAEVKHDGAITQFVADHALDLLDVDNEGFDYMDRKLMLAIIDKFMGGPVGLDNLAAAIGEERETIEDVLEPFLIQQGFIQRTPRGRIATARAYQHFQLIKPE</sequence>
<comment type="function">
    <text evidence="1">The RuvA-RuvB-RuvC complex processes Holliday junction (HJ) DNA during genetic recombination and DNA repair, while the RuvA-RuvB complex plays an important role in the rescue of blocked DNA replication forks via replication fork reversal (RFR). RuvA specifically binds to HJ cruciform DNA, conferring on it an open structure. The RuvB hexamer acts as an ATP-dependent pump, pulling dsDNA into and through the RuvAB complex. RuvB forms 2 homohexamers on either side of HJ DNA bound by 1 or 2 RuvA tetramers; 4 subunits per hexamer contact DNA at a time. Coordinated motions by a converter formed by DNA-disengaged RuvB subunits stimulates ATP hydrolysis and nucleotide exchange. Immobilization of the converter enables RuvB to convert the ATP-contained energy into a lever motion, pulling 2 nucleotides of DNA out of the RuvA tetramer per ATP hydrolyzed, thus driving DNA branch migration. The RuvB motors rotate together with the DNA substrate, which together with the progressing nucleotide cycle form the mechanistic basis for DNA recombination by continuous HJ branch migration. Branch migration allows RuvC to scan DNA until it finds its consensus sequence, where it cleaves and resolves cruciform DNA.</text>
</comment>
<comment type="catalytic activity">
    <reaction evidence="1">
        <text>ATP + H2O = ADP + phosphate + H(+)</text>
        <dbReference type="Rhea" id="RHEA:13065"/>
        <dbReference type="ChEBI" id="CHEBI:15377"/>
        <dbReference type="ChEBI" id="CHEBI:15378"/>
        <dbReference type="ChEBI" id="CHEBI:30616"/>
        <dbReference type="ChEBI" id="CHEBI:43474"/>
        <dbReference type="ChEBI" id="CHEBI:456216"/>
    </reaction>
</comment>
<comment type="subunit">
    <text evidence="1">Homohexamer. Forms an RuvA(8)-RuvB(12)-Holliday junction (HJ) complex. HJ DNA is sandwiched between 2 RuvA tetramers; dsDNA enters through RuvA and exits via RuvB. An RuvB hexamer assembles on each DNA strand where it exits the tetramer. Each RuvB hexamer is contacted by two RuvA subunits (via domain III) on 2 adjacent RuvB subunits; this complex drives branch migration. In the full resolvosome a probable DNA-RuvA(4)-RuvB(12)-RuvC(2) complex forms which resolves the HJ.</text>
</comment>
<comment type="subcellular location">
    <subcellularLocation>
        <location evidence="1">Cytoplasm</location>
    </subcellularLocation>
</comment>
<comment type="domain">
    <text evidence="1">Has 3 domains, the large (RuvB-L) and small ATPase (RuvB-S) domains and the C-terminal head (RuvB-H) domain. The head domain binds DNA, while the ATPase domains jointly bind ATP, ADP or are empty depending on the state of the subunit in the translocation cycle. During a single DNA translocation step the structure of each domain remains the same, but their relative positions change.</text>
</comment>
<comment type="similarity">
    <text evidence="1">Belongs to the RuvB family.</text>
</comment>
<reference key="1">
    <citation type="submission" date="2006-12" db="EMBL/GenBank/DDBJ databases">
        <title>Complete sequence of Shewanella sp. W3-18-1.</title>
        <authorList>
            <consortium name="US DOE Joint Genome Institute"/>
            <person name="Copeland A."/>
            <person name="Lucas S."/>
            <person name="Lapidus A."/>
            <person name="Barry K."/>
            <person name="Detter J.C."/>
            <person name="Glavina del Rio T."/>
            <person name="Hammon N."/>
            <person name="Israni S."/>
            <person name="Dalin E."/>
            <person name="Tice H."/>
            <person name="Pitluck S."/>
            <person name="Chain P."/>
            <person name="Malfatti S."/>
            <person name="Shin M."/>
            <person name="Vergez L."/>
            <person name="Schmutz J."/>
            <person name="Larimer F."/>
            <person name="Land M."/>
            <person name="Hauser L."/>
            <person name="Kyrpides N."/>
            <person name="Lykidis A."/>
            <person name="Tiedje J."/>
            <person name="Richardson P."/>
        </authorList>
    </citation>
    <scope>NUCLEOTIDE SEQUENCE [LARGE SCALE GENOMIC DNA]</scope>
    <source>
        <strain>W3-18-1</strain>
    </source>
</reference>
<feature type="chain" id="PRO_1000001479" description="Holliday junction branch migration complex subunit RuvB">
    <location>
        <begin position="1"/>
        <end position="334"/>
    </location>
</feature>
<feature type="region of interest" description="Large ATPase domain (RuvB-L)" evidence="1">
    <location>
        <begin position="4"/>
        <end position="184"/>
    </location>
</feature>
<feature type="region of interest" description="Small ATPAse domain (RuvB-S)" evidence="1">
    <location>
        <begin position="185"/>
        <end position="255"/>
    </location>
</feature>
<feature type="region of interest" description="Head domain (RuvB-H)" evidence="1">
    <location>
        <begin position="258"/>
        <end position="334"/>
    </location>
</feature>
<feature type="binding site" evidence="1">
    <location>
        <position position="24"/>
    </location>
    <ligand>
        <name>ATP</name>
        <dbReference type="ChEBI" id="CHEBI:30616"/>
    </ligand>
</feature>
<feature type="binding site" evidence="1">
    <location>
        <position position="65"/>
    </location>
    <ligand>
        <name>ATP</name>
        <dbReference type="ChEBI" id="CHEBI:30616"/>
    </ligand>
</feature>
<feature type="binding site" evidence="1">
    <location>
        <position position="68"/>
    </location>
    <ligand>
        <name>ATP</name>
        <dbReference type="ChEBI" id="CHEBI:30616"/>
    </ligand>
</feature>
<feature type="binding site" evidence="1">
    <location>
        <position position="69"/>
    </location>
    <ligand>
        <name>ATP</name>
        <dbReference type="ChEBI" id="CHEBI:30616"/>
    </ligand>
</feature>
<feature type="binding site" evidence="1">
    <location>
        <position position="69"/>
    </location>
    <ligand>
        <name>Mg(2+)</name>
        <dbReference type="ChEBI" id="CHEBI:18420"/>
    </ligand>
</feature>
<feature type="binding site" evidence="1">
    <location>
        <position position="70"/>
    </location>
    <ligand>
        <name>ATP</name>
        <dbReference type="ChEBI" id="CHEBI:30616"/>
    </ligand>
</feature>
<feature type="binding site" evidence="1">
    <location>
        <begin position="131"/>
        <end position="133"/>
    </location>
    <ligand>
        <name>ATP</name>
        <dbReference type="ChEBI" id="CHEBI:30616"/>
    </ligand>
</feature>
<feature type="binding site" evidence="1">
    <location>
        <position position="174"/>
    </location>
    <ligand>
        <name>ATP</name>
        <dbReference type="ChEBI" id="CHEBI:30616"/>
    </ligand>
</feature>
<feature type="binding site" evidence="1">
    <location>
        <position position="184"/>
    </location>
    <ligand>
        <name>ATP</name>
        <dbReference type="ChEBI" id="CHEBI:30616"/>
    </ligand>
</feature>
<feature type="binding site" evidence="1">
    <location>
        <position position="221"/>
    </location>
    <ligand>
        <name>ATP</name>
        <dbReference type="ChEBI" id="CHEBI:30616"/>
    </ligand>
</feature>
<feature type="binding site" evidence="1">
    <location>
        <position position="294"/>
    </location>
    <ligand>
        <name>DNA</name>
        <dbReference type="ChEBI" id="CHEBI:16991"/>
    </ligand>
</feature>
<feature type="binding site" evidence="1">
    <location>
        <position position="313"/>
    </location>
    <ligand>
        <name>DNA</name>
        <dbReference type="ChEBI" id="CHEBI:16991"/>
    </ligand>
</feature>
<feature type="binding site" evidence="1">
    <location>
        <position position="318"/>
    </location>
    <ligand>
        <name>DNA</name>
        <dbReference type="ChEBI" id="CHEBI:16991"/>
    </ligand>
</feature>
<proteinExistence type="inferred from homology"/>
<accession>A1RJQ2</accession>
<protein>
    <recommendedName>
        <fullName evidence="1">Holliday junction branch migration complex subunit RuvB</fullName>
        <ecNumber evidence="1">3.6.4.-</ecNumber>
    </recommendedName>
</protein>